<name>RS16_ACIB5</name>
<accession>B7IAT2</accession>
<keyword id="KW-0687">Ribonucleoprotein</keyword>
<keyword id="KW-0689">Ribosomal protein</keyword>
<proteinExistence type="inferred from homology"/>
<sequence length="83" mass="9200">MVVIRLARGGAKKRPFYQIVVTDSRNARDGRFIERIGFFNPTAQGQAEKLRLDADRFAHWVSQGAQPSERVASLAAQAKKATA</sequence>
<evidence type="ECO:0000255" key="1">
    <source>
        <dbReference type="HAMAP-Rule" id="MF_00385"/>
    </source>
</evidence>
<evidence type="ECO:0000305" key="2"/>
<feature type="chain" id="PRO_1000196310" description="Small ribosomal subunit protein bS16">
    <location>
        <begin position="1"/>
        <end position="83"/>
    </location>
</feature>
<protein>
    <recommendedName>
        <fullName evidence="1">Small ribosomal subunit protein bS16</fullName>
    </recommendedName>
    <alternativeName>
        <fullName evidence="2">30S ribosomal protein S16</fullName>
    </alternativeName>
</protein>
<comment type="similarity">
    <text evidence="1">Belongs to the bacterial ribosomal protein bS16 family.</text>
</comment>
<gene>
    <name evidence="1" type="primary">rpsP</name>
    <name type="ordered locus">AB57_3618</name>
</gene>
<dbReference type="EMBL" id="CP001182">
    <property type="protein sequence ID" value="ACJ42979.1"/>
    <property type="molecule type" value="Genomic_DNA"/>
</dbReference>
<dbReference type="RefSeq" id="WP_000260334.1">
    <property type="nucleotide sequence ID" value="NC_011586.2"/>
</dbReference>
<dbReference type="SMR" id="B7IAT2"/>
<dbReference type="IntAct" id="B7IAT2">
    <property type="interactions" value="1"/>
</dbReference>
<dbReference type="GeneID" id="9380727"/>
<dbReference type="KEGG" id="abn:AB57_3618"/>
<dbReference type="HOGENOM" id="CLU_100590_5_1_6"/>
<dbReference type="Proteomes" id="UP000007094">
    <property type="component" value="Chromosome"/>
</dbReference>
<dbReference type="GO" id="GO:0005737">
    <property type="term" value="C:cytoplasm"/>
    <property type="evidence" value="ECO:0007669"/>
    <property type="project" value="UniProtKB-ARBA"/>
</dbReference>
<dbReference type="GO" id="GO:0015935">
    <property type="term" value="C:small ribosomal subunit"/>
    <property type="evidence" value="ECO:0007669"/>
    <property type="project" value="TreeGrafter"/>
</dbReference>
<dbReference type="GO" id="GO:0003735">
    <property type="term" value="F:structural constituent of ribosome"/>
    <property type="evidence" value="ECO:0007669"/>
    <property type="project" value="InterPro"/>
</dbReference>
<dbReference type="GO" id="GO:0006412">
    <property type="term" value="P:translation"/>
    <property type="evidence" value="ECO:0007669"/>
    <property type="project" value="UniProtKB-UniRule"/>
</dbReference>
<dbReference type="FunFam" id="3.30.1320.10:FF:000001">
    <property type="entry name" value="30S ribosomal protein S16"/>
    <property type="match status" value="1"/>
</dbReference>
<dbReference type="Gene3D" id="3.30.1320.10">
    <property type="match status" value="1"/>
</dbReference>
<dbReference type="HAMAP" id="MF_00385">
    <property type="entry name" value="Ribosomal_bS16"/>
    <property type="match status" value="1"/>
</dbReference>
<dbReference type="InterPro" id="IPR000307">
    <property type="entry name" value="Ribosomal_bS16"/>
</dbReference>
<dbReference type="InterPro" id="IPR020592">
    <property type="entry name" value="Ribosomal_bS16_CS"/>
</dbReference>
<dbReference type="InterPro" id="IPR023803">
    <property type="entry name" value="Ribosomal_bS16_dom_sf"/>
</dbReference>
<dbReference type="NCBIfam" id="TIGR00002">
    <property type="entry name" value="S16"/>
    <property type="match status" value="1"/>
</dbReference>
<dbReference type="PANTHER" id="PTHR12919">
    <property type="entry name" value="30S RIBOSOMAL PROTEIN S16"/>
    <property type="match status" value="1"/>
</dbReference>
<dbReference type="PANTHER" id="PTHR12919:SF20">
    <property type="entry name" value="SMALL RIBOSOMAL SUBUNIT PROTEIN BS16M"/>
    <property type="match status" value="1"/>
</dbReference>
<dbReference type="Pfam" id="PF00886">
    <property type="entry name" value="Ribosomal_S16"/>
    <property type="match status" value="1"/>
</dbReference>
<dbReference type="SUPFAM" id="SSF54565">
    <property type="entry name" value="Ribosomal protein S16"/>
    <property type="match status" value="1"/>
</dbReference>
<dbReference type="PROSITE" id="PS00732">
    <property type="entry name" value="RIBOSOMAL_S16"/>
    <property type="match status" value="1"/>
</dbReference>
<reference key="1">
    <citation type="journal article" date="2008" name="J. Bacteriol.">
        <title>Comparative genome sequence analysis of multidrug-resistant Acinetobacter baumannii.</title>
        <authorList>
            <person name="Adams M.D."/>
            <person name="Goglin K."/>
            <person name="Molyneaux N."/>
            <person name="Hujer K.M."/>
            <person name="Lavender H."/>
            <person name="Jamison J.J."/>
            <person name="MacDonald I.J."/>
            <person name="Martin K.M."/>
            <person name="Russo T."/>
            <person name="Campagnari A.A."/>
            <person name="Hujer A.M."/>
            <person name="Bonomo R.A."/>
            <person name="Gill S.R."/>
        </authorList>
    </citation>
    <scope>NUCLEOTIDE SEQUENCE [LARGE SCALE GENOMIC DNA]</scope>
    <source>
        <strain>AB0057</strain>
    </source>
</reference>
<organism>
    <name type="scientific">Acinetobacter baumannii (strain AB0057)</name>
    <dbReference type="NCBI Taxonomy" id="480119"/>
    <lineage>
        <taxon>Bacteria</taxon>
        <taxon>Pseudomonadati</taxon>
        <taxon>Pseudomonadota</taxon>
        <taxon>Gammaproteobacteria</taxon>
        <taxon>Moraxellales</taxon>
        <taxon>Moraxellaceae</taxon>
        <taxon>Acinetobacter</taxon>
        <taxon>Acinetobacter calcoaceticus/baumannii complex</taxon>
    </lineage>
</organism>